<feature type="chain" id="PRO_1000128891" description="L-rhamnose isomerase">
    <location>
        <begin position="1"/>
        <end position="419"/>
    </location>
</feature>
<feature type="binding site" evidence="1">
    <location>
        <position position="262"/>
    </location>
    <ligand>
        <name>Mn(2+)</name>
        <dbReference type="ChEBI" id="CHEBI:29035"/>
    </ligand>
</feature>
<feature type="binding site" evidence="1">
    <location>
        <position position="294"/>
    </location>
    <ligand>
        <name>Mn(2+)</name>
        <dbReference type="ChEBI" id="CHEBI:29035"/>
    </ligand>
</feature>
<feature type="binding site" evidence="1">
    <location>
        <position position="296"/>
    </location>
    <ligand>
        <name>Mn(2+)</name>
        <dbReference type="ChEBI" id="CHEBI:29035"/>
    </ligand>
</feature>
<keyword id="KW-0963">Cytoplasm</keyword>
<keyword id="KW-0413">Isomerase</keyword>
<keyword id="KW-0464">Manganese</keyword>
<keyword id="KW-0479">Metal-binding</keyword>
<keyword id="KW-0684">Rhamnose metabolism</keyword>
<evidence type="ECO:0000255" key="1">
    <source>
        <dbReference type="HAMAP-Rule" id="MF_00541"/>
    </source>
</evidence>
<organism>
    <name type="scientific">Salmonella newport (strain SL254)</name>
    <dbReference type="NCBI Taxonomy" id="423368"/>
    <lineage>
        <taxon>Bacteria</taxon>
        <taxon>Pseudomonadati</taxon>
        <taxon>Pseudomonadota</taxon>
        <taxon>Gammaproteobacteria</taxon>
        <taxon>Enterobacterales</taxon>
        <taxon>Enterobacteriaceae</taxon>
        <taxon>Salmonella</taxon>
    </lineage>
</organism>
<accession>B4SZZ1</accession>
<reference key="1">
    <citation type="journal article" date="2011" name="J. Bacteriol.">
        <title>Comparative genomics of 28 Salmonella enterica isolates: evidence for CRISPR-mediated adaptive sublineage evolution.</title>
        <authorList>
            <person name="Fricke W.F."/>
            <person name="Mammel M.K."/>
            <person name="McDermott P.F."/>
            <person name="Tartera C."/>
            <person name="White D.G."/>
            <person name="Leclerc J.E."/>
            <person name="Ravel J."/>
            <person name="Cebula T.A."/>
        </authorList>
    </citation>
    <scope>NUCLEOTIDE SEQUENCE [LARGE SCALE GENOMIC DNA]</scope>
    <source>
        <strain>SL254</strain>
    </source>
</reference>
<dbReference type="EC" id="5.3.1.14" evidence="1"/>
<dbReference type="EMBL" id="CP001113">
    <property type="protein sequence ID" value="ACF62827.1"/>
    <property type="molecule type" value="Genomic_DNA"/>
</dbReference>
<dbReference type="RefSeq" id="WP_000211454.1">
    <property type="nucleotide sequence ID" value="NZ_CCMR01000001.1"/>
</dbReference>
<dbReference type="SMR" id="B4SZZ1"/>
<dbReference type="KEGG" id="see:SNSL254_A4329"/>
<dbReference type="HOGENOM" id="CLU_052790_0_0_6"/>
<dbReference type="UniPathway" id="UPA00541">
    <property type="reaction ID" value="UER00601"/>
</dbReference>
<dbReference type="Proteomes" id="UP000008824">
    <property type="component" value="Chromosome"/>
</dbReference>
<dbReference type="GO" id="GO:0005737">
    <property type="term" value="C:cytoplasm"/>
    <property type="evidence" value="ECO:0007669"/>
    <property type="project" value="UniProtKB-SubCell"/>
</dbReference>
<dbReference type="GO" id="GO:0008740">
    <property type="term" value="F:L-rhamnose isomerase activity"/>
    <property type="evidence" value="ECO:0007669"/>
    <property type="project" value="UniProtKB-UniRule"/>
</dbReference>
<dbReference type="GO" id="GO:0030145">
    <property type="term" value="F:manganese ion binding"/>
    <property type="evidence" value="ECO:0007669"/>
    <property type="project" value="UniProtKB-UniRule"/>
</dbReference>
<dbReference type="GO" id="GO:0019324">
    <property type="term" value="P:L-lyxose metabolic process"/>
    <property type="evidence" value="ECO:0007669"/>
    <property type="project" value="TreeGrafter"/>
</dbReference>
<dbReference type="GO" id="GO:0019301">
    <property type="term" value="P:rhamnose catabolic process"/>
    <property type="evidence" value="ECO:0007669"/>
    <property type="project" value="UniProtKB-UniRule"/>
</dbReference>
<dbReference type="FunFam" id="3.20.20.150:FF:000006">
    <property type="entry name" value="L-rhamnose isomerase"/>
    <property type="match status" value="1"/>
</dbReference>
<dbReference type="Gene3D" id="3.20.20.150">
    <property type="entry name" value="Divalent-metal-dependent TIM barrel enzymes"/>
    <property type="match status" value="1"/>
</dbReference>
<dbReference type="HAMAP" id="MF_00541">
    <property type="entry name" value="RhaA"/>
    <property type="match status" value="1"/>
</dbReference>
<dbReference type="InterPro" id="IPR050337">
    <property type="entry name" value="L-rhamnose_isomerase"/>
</dbReference>
<dbReference type="InterPro" id="IPR009308">
    <property type="entry name" value="Rhamnose_isomerase"/>
</dbReference>
<dbReference type="InterPro" id="IPR036237">
    <property type="entry name" value="Xyl_isomerase-like_sf"/>
</dbReference>
<dbReference type="NCBIfam" id="NF002203">
    <property type="entry name" value="PRK01076.1"/>
    <property type="match status" value="1"/>
</dbReference>
<dbReference type="NCBIfam" id="TIGR01748">
    <property type="entry name" value="rhaA"/>
    <property type="match status" value="1"/>
</dbReference>
<dbReference type="PANTHER" id="PTHR30268">
    <property type="entry name" value="L-RHAMNOSE ISOMERASE"/>
    <property type="match status" value="1"/>
</dbReference>
<dbReference type="PANTHER" id="PTHR30268:SF0">
    <property type="entry name" value="L-RHAMNOSE ISOMERASE"/>
    <property type="match status" value="1"/>
</dbReference>
<dbReference type="Pfam" id="PF06134">
    <property type="entry name" value="RhaA"/>
    <property type="match status" value="1"/>
</dbReference>
<dbReference type="SUPFAM" id="SSF51658">
    <property type="entry name" value="Xylose isomerase-like"/>
    <property type="match status" value="1"/>
</dbReference>
<sequence length="419" mass="47411">MTTQLEQAWELAKQRFAAVGIDIEEALRQLDRLPVSMHCWQGDDVAGFENPEGSLTGGIQSTGNYPGKARNATELRADLEQALRLIPGPKRLNLHAIYLESDTPVARDQIKPEHFKNWVEWAKANRLGLDFNPTCFSHPLSADGFTLSHPDAKIRQFWIDHCKASRRVSAYFGEQLGTPSVMNIWIPDGMKDITVDRLAPRQRLLEALDEVISEKFDPAHHIDAVESKLFGIGAESYTVGSNEFYMGYATSRQTALCLDAGHFHPTEVISDKISAAMLYVPRLLLHVSRPVRWDSDHVVLLDDETQAIASEIVRHNLFDRVHIGLDFFDASINRVAAWVIGTRNMKKALLRALLEPTDQLRQLEASGDYTARLALLEEQKSLPWQAVWEMYCQRHDTPAGSQWLDSVRAYEKEILSKRS</sequence>
<comment type="function">
    <text evidence="1">Catalyzes the interconversion of L-rhamnose and L-rhamnulose.</text>
</comment>
<comment type="catalytic activity">
    <reaction evidence="1">
        <text>L-rhamnopyranose = L-rhamnulose</text>
        <dbReference type="Rhea" id="RHEA:23160"/>
        <dbReference type="ChEBI" id="CHEBI:17897"/>
        <dbReference type="ChEBI" id="CHEBI:62346"/>
        <dbReference type="EC" id="5.3.1.14"/>
    </reaction>
</comment>
<comment type="cofactor">
    <cofactor evidence="1">
        <name>Mn(2+)</name>
        <dbReference type="ChEBI" id="CHEBI:29035"/>
    </cofactor>
    <text evidence="1">Binds 1 Mn(2+) ion per subunit.</text>
</comment>
<comment type="pathway">
    <text evidence="1">Carbohydrate degradation; L-rhamnose degradation; glycerone phosphate from L-rhamnose: step 1/3.</text>
</comment>
<comment type="subunit">
    <text evidence="1">Homotetramer.</text>
</comment>
<comment type="subcellular location">
    <subcellularLocation>
        <location evidence="1">Cytoplasm</location>
    </subcellularLocation>
</comment>
<comment type="similarity">
    <text evidence="1">Belongs to the rhamnose isomerase family.</text>
</comment>
<proteinExistence type="inferred from homology"/>
<protein>
    <recommendedName>
        <fullName evidence="1">L-rhamnose isomerase</fullName>
        <ecNumber evidence="1">5.3.1.14</ecNumber>
    </recommendedName>
</protein>
<gene>
    <name evidence="1" type="primary">rhaA</name>
    <name type="ordered locus">SNSL254_A4329</name>
</gene>
<name>RHAA_SALNS</name>